<accession>P0AEG8</accession>
<accession>P40678</accession>
<proteinExistence type="evidence at transcript level"/>
<comment type="induction">
    <text>Expression is dependent on RpoS.</text>
</comment>
<comment type="similarity">
    <text evidence="1">Belongs to the DsrB family.</text>
</comment>
<organism>
    <name type="scientific">Escherichia coli (strain K12)</name>
    <dbReference type="NCBI Taxonomy" id="83333"/>
    <lineage>
        <taxon>Bacteria</taxon>
        <taxon>Pseudomonadati</taxon>
        <taxon>Pseudomonadota</taxon>
        <taxon>Gammaproteobacteria</taxon>
        <taxon>Enterobacterales</taxon>
        <taxon>Enterobacteriaceae</taxon>
        <taxon>Escherichia</taxon>
    </lineage>
</organism>
<protein>
    <recommendedName>
        <fullName>Protein DsrB</fullName>
    </recommendedName>
</protein>
<sequence length="62" mass="6946">MKVNDRVTVKTDGGPRRPGVVLAVEEFSEGTMYLVSLEDYPLGIWFFNEAGHQDGIFVEKAE</sequence>
<evidence type="ECO:0000305" key="1"/>
<gene>
    <name type="primary">dsrB</name>
    <name type="ordered locus">b1952</name>
    <name type="ordered locus">JW1936</name>
</gene>
<name>DSRB_ECOLI</name>
<keyword id="KW-1185">Reference proteome</keyword>
<dbReference type="EMBL" id="U17136">
    <property type="protein sequence ID" value="AAB60008.1"/>
    <property type="molecule type" value="Genomic_DNA"/>
</dbReference>
<dbReference type="EMBL" id="U00096">
    <property type="protein sequence ID" value="AAC75019.1"/>
    <property type="molecule type" value="Genomic_DNA"/>
</dbReference>
<dbReference type="EMBL" id="AP009048">
    <property type="protein sequence ID" value="BAA15777.1"/>
    <property type="molecule type" value="Genomic_DNA"/>
</dbReference>
<dbReference type="PIR" id="I59352">
    <property type="entry name" value="I59352"/>
</dbReference>
<dbReference type="RefSeq" id="NP_416462.1">
    <property type="nucleotide sequence ID" value="NC_000913.3"/>
</dbReference>
<dbReference type="RefSeq" id="WP_000867217.1">
    <property type="nucleotide sequence ID" value="NZ_STEB01000050.1"/>
</dbReference>
<dbReference type="SMR" id="P0AEG8"/>
<dbReference type="BioGRID" id="4261048">
    <property type="interactions" value="7"/>
</dbReference>
<dbReference type="BioGRID" id="850822">
    <property type="interactions" value="2"/>
</dbReference>
<dbReference type="FunCoup" id="P0AEG8">
    <property type="interactions" value="27"/>
</dbReference>
<dbReference type="IntAct" id="P0AEG8">
    <property type="interactions" value="2"/>
</dbReference>
<dbReference type="STRING" id="511145.b1952"/>
<dbReference type="PaxDb" id="511145-b1952"/>
<dbReference type="EnsemblBacteria" id="AAC75019">
    <property type="protein sequence ID" value="AAC75019"/>
    <property type="gene ID" value="b1952"/>
</dbReference>
<dbReference type="GeneID" id="93775233"/>
<dbReference type="GeneID" id="946468"/>
<dbReference type="KEGG" id="ecj:JW1936"/>
<dbReference type="KEGG" id="eco:b1952"/>
<dbReference type="KEGG" id="ecoc:C3026_11050"/>
<dbReference type="PATRIC" id="fig|511145.12.peg.2031"/>
<dbReference type="EchoBASE" id="EB2517"/>
<dbReference type="eggNOG" id="ENOG5032ZW5">
    <property type="taxonomic scope" value="Bacteria"/>
</dbReference>
<dbReference type="HOGENOM" id="CLU_189289_0_0_6"/>
<dbReference type="InParanoid" id="P0AEG8"/>
<dbReference type="OMA" id="IWFFNEL"/>
<dbReference type="PhylomeDB" id="P0AEG8"/>
<dbReference type="BioCyc" id="EcoCyc:G7045-MONOMER"/>
<dbReference type="PRO" id="PR:P0AEG8"/>
<dbReference type="Proteomes" id="UP000000625">
    <property type="component" value="Chromosome"/>
</dbReference>
<dbReference type="HAMAP" id="MF_01549">
    <property type="entry name" value="DsrB"/>
    <property type="match status" value="1"/>
</dbReference>
<dbReference type="InterPro" id="IPR019717">
    <property type="entry name" value="Dextransucrase_DSRB"/>
</dbReference>
<dbReference type="NCBIfam" id="NF007981">
    <property type="entry name" value="PRK10708.1"/>
    <property type="match status" value="1"/>
</dbReference>
<dbReference type="Pfam" id="PF10781">
    <property type="entry name" value="DSRB"/>
    <property type="match status" value="1"/>
</dbReference>
<feature type="chain" id="PRO_0000201907" description="Protein DsrB">
    <location>
        <begin position="1"/>
        <end position="62"/>
    </location>
</feature>
<reference key="1">
    <citation type="journal article" date="1995" name="Proc. Natl. Acad. Sci. U.S.A.">
        <title>A small RNA acts as an antisilencer of the H-NS-silenced rcsA gene of Escherichia coli.</title>
        <authorList>
            <person name="Sledjeski D."/>
            <person name="Gottesman S."/>
        </authorList>
    </citation>
    <scope>NUCLEOTIDE SEQUENCE [GENOMIC DNA]</scope>
    <source>
        <strain>K12 / MC4100 / SG20250</strain>
    </source>
</reference>
<reference key="2">
    <citation type="journal article" date="1996" name="DNA Res.">
        <title>A 460-kb DNA sequence of the Escherichia coli K-12 genome corresponding to the 40.1-50.0 min region on the linkage map.</title>
        <authorList>
            <person name="Itoh T."/>
            <person name="Aiba H."/>
            <person name="Baba T."/>
            <person name="Fujita K."/>
            <person name="Hayashi K."/>
            <person name="Inada T."/>
            <person name="Isono K."/>
            <person name="Kasai H."/>
            <person name="Kimura S."/>
            <person name="Kitakawa M."/>
            <person name="Kitagawa M."/>
            <person name="Makino K."/>
            <person name="Miki T."/>
            <person name="Mizobuchi K."/>
            <person name="Mori H."/>
            <person name="Mori T."/>
            <person name="Motomura K."/>
            <person name="Nakade S."/>
            <person name="Nakamura Y."/>
            <person name="Nashimoto H."/>
            <person name="Nishio Y."/>
            <person name="Oshima T."/>
            <person name="Saito N."/>
            <person name="Sampei G."/>
            <person name="Seki Y."/>
            <person name="Sivasundaram S."/>
            <person name="Tagami H."/>
            <person name="Takeda J."/>
            <person name="Takemoto K."/>
            <person name="Wada C."/>
            <person name="Yamamoto Y."/>
            <person name="Horiuchi T."/>
        </authorList>
    </citation>
    <scope>NUCLEOTIDE SEQUENCE [LARGE SCALE GENOMIC DNA]</scope>
    <source>
        <strain>K12 / W3110 / ATCC 27325 / DSM 5911</strain>
    </source>
</reference>
<reference key="3">
    <citation type="journal article" date="1997" name="Science">
        <title>The complete genome sequence of Escherichia coli K-12.</title>
        <authorList>
            <person name="Blattner F.R."/>
            <person name="Plunkett G. III"/>
            <person name="Bloch C.A."/>
            <person name="Perna N.T."/>
            <person name="Burland V."/>
            <person name="Riley M."/>
            <person name="Collado-Vides J."/>
            <person name="Glasner J.D."/>
            <person name="Rode C.K."/>
            <person name="Mayhew G.F."/>
            <person name="Gregor J."/>
            <person name="Davis N.W."/>
            <person name="Kirkpatrick H.A."/>
            <person name="Goeden M.A."/>
            <person name="Rose D.J."/>
            <person name="Mau B."/>
            <person name="Shao Y."/>
        </authorList>
    </citation>
    <scope>NUCLEOTIDE SEQUENCE [LARGE SCALE GENOMIC DNA]</scope>
    <source>
        <strain>K12 / MG1655 / ATCC 47076</strain>
    </source>
</reference>
<reference key="4">
    <citation type="journal article" date="2006" name="Mol. Syst. Biol.">
        <title>Highly accurate genome sequences of Escherichia coli K-12 strains MG1655 and W3110.</title>
        <authorList>
            <person name="Hayashi K."/>
            <person name="Morooka N."/>
            <person name="Yamamoto Y."/>
            <person name="Fujita K."/>
            <person name="Isono K."/>
            <person name="Choi S."/>
            <person name="Ohtsubo E."/>
            <person name="Baba T."/>
            <person name="Wanner B.L."/>
            <person name="Mori H."/>
            <person name="Horiuchi T."/>
        </authorList>
    </citation>
    <scope>NUCLEOTIDE SEQUENCE [LARGE SCALE GENOMIC DNA]</scope>
    <source>
        <strain>K12 / W3110 / ATCC 27325 / DSM 5911</strain>
    </source>
</reference>
<reference key="5">
    <citation type="journal article" date="1996" name="EMBO J.">
        <title>The small RNA, DsrA, is essential for the low temperature expression of RpoS during exponential growth in Escherichia coli.</title>
        <authorList>
            <person name="Sledjeski D.D."/>
            <person name="Gupta A."/>
            <person name="Gottesman S."/>
        </authorList>
    </citation>
    <scope>REGULATION BY RPOS</scope>
    <source>
        <strain>K12 / MC4100 / SG20250</strain>
    </source>
</reference>